<accession>A8YUN8</accession>
<reference key="1">
    <citation type="journal article" date="2008" name="J. Bacteriol.">
        <title>Genome sequence of Lactobacillus helveticus: an organism distinguished by selective gene loss and IS element expansion.</title>
        <authorList>
            <person name="Callanan M."/>
            <person name="Kaleta P."/>
            <person name="O'Callaghan J."/>
            <person name="O'Sullivan O."/>
            <person name="Jordan K."/>
            <person name="McAuliffe O."/>
            <person name="Sangrador-Vegas A."/>
            <person name="Slattery L."/>
            <person name="Fitzgerald G.F."/>
            <person name="Beresford T."/>
            <person name="Ross R.P."/>
        </authorList>
    </citation>
    <scope>NUCLEOTIDE SEQUENCE [LARGE SCALE GENOMIC DNA]</scope>
    <source>
        <strain>DPC 4571</strain>
    </source>
</reference>
<gene>
    <name evidence="1" type="primary">murD</name>
    <name type="ordered locus">lhv_0855</name>
</gene>
<comment type="function">
    <text evidence="1">Cell wall formation. Catalyzes the addition of glutamate to the nucleotide precursor UDP-N-acetylmuramoyl-L-alanine (UMA).</text>
</comment>
<comment type="catalytic activity">
    <reaction evidence="1">
        <text>UDP-N-acetyl-alpha-D-muramoyl-L-alanine + D-glutamate + ATP = UDP-N-acetyl-alpha-D-muramoyl-L-alanyl-D-glutamate + ADP + phosphate + H(+)</text>
        <dbReference type="Rhea" id="RHEA:16429"/>
        <dbReference type="ChEBI" id="CHEBI:15378"/>
        <dbReference type="ChEBI" id="CHEBI:29986"/>
        <dbReference type="ChEBI" id="CHEBI:30616"/>
        <dbReference type="ChEBI" id="CHEBI:43474"/>
        <dbReference type="ChEBI" id="CHEBI:83898"/>
        <dbReference type="ChEBI" id="CHEBI:83900"/>
        <dbReference type="ChEBI" id="CHEBI:456216"/>
        <dbReference type="EC" id="6.3.2.9"/>
    </reaction>
</comment>
<comment type="pathway">
    <text evidence="1">Cell wall biogenesis; peptidoglycan biosynthesis.</text>
</comment>
<comment type="subcellular location">
    <subcellularLocation>
        <location evidence="1">Cytoplasm</location>
    </subcellularLocation>
</comment>
<comment type="similarity">
    <text evidence="1">Belongs to the MurCDEF family.</text>
</comment>
<feature type="chain" id="PRO_1000072683" description="UDP-N-acetylmuramoylalanine--D-glutamate ligase">
    <location>
        <begin position="1"/>
        <end position="459"/>
    </location>
</feature>
<feature type="binding site" evidence="1">
    <location>
        <begin position="120"/>
        <end position="126"/>
    </location>
    <ligand>
        <name>ATP</name>
        <dbReference type="ChEBI" id="CHEBI:30616"/>
    </ligand>
</feature>
<name>MURD_LACH4</name>
<dbReference type="EC" id="6.3.2.9" evidence="1"/>
<dbReference type="EMBL" id="CP000517">
    <property type="protein sequence ID" value="ABX26976.1"/>
    <property type="molecule type" value="Genomic_DNA"/>
</dbReference>
<dbReference type="RefSeq" id="WP_003627666.1">
    <property type="nucleotide sequence ID" value="NC_010080.1"/>
</dbReference>
<dbReference type="SMR" id="A8YUN8"/>
<dbReference type="GeneID" id="83725211"/>
<dbReference type="KEGG" id="lhe:lhv_0855"/>
<dbReference type="eggNOG" id="COG0771">
    <property type="taxonomic scope" value="Bacteria"/>
</dbReference>
<dbReference type="HOGENOM" id="CLU_032540_0_1_9"/>
<dbReference type="UniPathway" id="UPA00219"/>
<dbReference type="Proteomes" id="UP000000790">
    <property type="component" value="Chromosome"/>
</dbReference>
<dbReference type="GO" id="GO:0005737">
    <property type="term" value="C:cytoplasm"/>
    <property type="evidence" value="ECO:0007669"/>
    <property type="project" value="UniProtKB-SubCell"/>
</dbReference>
<dbReference type="GO" id="GO:0005524">
    <property type="term" value="F:ATP binding"/>
    <property type="evidence" value="ECO:0007669"/>
    <property type="project" value="UniProtKB-UniRule"/>
</dbReference>
<dbReference type="GO" id="GO:0008764">
    <property type="term" value="F:UDP-N-acetylmuramoylalanine-D-glutamate ligase activity"/>
    <property type="evidence" value="ECO:0007669"/>
    <property type="project" value="UniProtKB-UniRule"/>
</dbReference>
<dbReference type="GO" id="GO:0051301">
    <property type="term" value="P:cell division"/>
    <property type="evidence" value="ECO:0007669"/>
    <property type="project" value="UniProtKB-KW"/>
</dbReference>
<dbReference type="GO" id="GO:0071555">
    <property type="term" value="P:cell wall organization"/>
    <property type="evidence" value="ECO:0007669"/>
    <property type="project" value="UniProtKB-KW"/>
</dbReference>
<dbReference type="GO" id="GO:0009252">
    <property type="term" value="P:peptidoglycan biosynthetic process"/>
    <property type="evidence" value="ECO:0007669"/>
    <property type="project" value="UniProtKB-UniRule"/>
</dbReference>
<dbReference type="GO" id="GO:0008360">
    <property type="term" value="P:regulation of cell shape"/>
    <property type="evidence" value="ECO:0007669"/>
    <property type="project" value="UniProtKB-KW"/>
</dbReference>
<dbReference type="Gene3D" id="3.90.190.20">
    <property type="entry name" value="Mur ligase, C-terminal domain"/>
    <property type="match status" value="1"/>
</dbReference>
<dbReference type="Gene3D" id="3.40.1190.10">
    <property type="entry name" value="Mur-like, catalytic domain"/>
    <property type="match status" value="1"/>
</dbReference>
<dbReference type="Gene3D" id="3.40.50.720">
    <property type="entry name" value="NAD(P)-binding Rossmann-like Domain"/>
    <property type="match status" value="1"/>
</dbReference>
<dbReference type="HAMAP" id="MF_00639">
    <property type="entry name" value="MurD"/>
    <property type="match status" value="1"/>
</dbReference>
<dbReference type="InterPro" id="IPR036565">
    <property type="entry name" value="Mur-like_cat_sf"/>
</dbReference>
<dbReference type="InterPro" id="IPR004101">
    <property type="entry name" value="Mur_ligase_C"/>
</dbReference>
<dbReference type="InterPro" id="IPR036615">
    <property type="entry name" value="Mur_ligase_C_dom_sf"/>
</dbReference>
<dbReference type="InterPro" id="IPR013221">
    <property type="entry name" value="Mur_ligase_cen"/>
</dbReference>
<dbReference type="InterPro" id="IPR005762">
    <property type="entry name" value="MurD"/>
</dbReference>
<dbReference type="NCBIfam" id="TIGR01087">
    <property type="entry name" value="murD"/>
    <property type="match status" value="1"/>
</dbReference>
<dbReference type="PANTHER" id="PTHR43692">
    <property type="entry name" value="UDP-N-ACETYLMURAMOYLALANINE--D-GLUTAMATE LIGASE"/>
    <property type="match status" value="1"/>
</dbReference>
<dbReference type="PANTHER" id="PTHR43692:SF1">
    <property type="entry name" value="UDP-N-ACETYLMURAMOYLALANINE--D-GLUTAMATE LIGASE"/>
    <property type="match status" value="1"/>
</dbReference>
<dbReference type="Pfam" id="PF02875">
    <property type="entry name" value="Mur_ligase_C"/>
    <property type="match status" value="1"/>
</dbReference>
<dbReference type="Pfam" id="PF08245">
    <property type="entry name" value="Mur_ligase_M"/>
    <property type="match status" value="1"/>
</dbReference>
<dbReference type="Pfam" id="PF21799">
    <property type="entry name" value="MurD-like_N"/>
    <property type="match status" value="1"/>
</dbReference>
<dbReference type="SUPFAM" id="SSF51984">
    <property type="entry name" value="MurCD N-terminal domain"/>
    <property type="match status" value="1"/>
</dbReference>
<dbReference type="SUPFAM" id="SSF53623">
    <property type="entry name" value="MurD-like peptide ligases, catalytic domain"/>
    <property type="match status" value="1"/>
</dbReference>
<dbReference type="SUPFAM" id="SSF53244">
    <property type="entry name" value="MurD-like peptide ligases, peptide-binding domain"/>
    <property type="match status" value="1"/>
</dbReference>
<sequence>MKDIKTYSNKNILVLGLGKSGFAVSELLLKLGAKLTLNDKADLDKNEKAQELKAKGVRVIGGHHPVDLLEKEHFDYLVKNPGIPYENPMVKKAEELNIPIITEPEIALSCSDAPYVCVTGSNGKTTTVMLTQRILDHHLQKSGHHAYAVGNIGVPISEVVPKATKDDILVVEISSFQLLGVTDIDPKVAAIVDIYNNVHLDYHKTFENYVNAKLNVTRTQNSDDYFIANYDQKDILAKEKEVTPAKMQTFSETDSSADYFIGDEYLESQNEKIMKIVDIKLPGIHNLQNSLVAIAISKVMGADNDDIAAVLSTFTGAKHRLQYVTTLDGRKVYNDSKSTNIEAATVAIPSFKEPEVLIAGGLDRGFLFDDLVPLFKKHVKSIVLYGETKYLLADAARKAGIKDIVIVNTLQEAVPRAYELSEPGDVILFSPACASWDQFRTFEDRGDYFVKFVKELKTK</sequence>
<proteinExistence type="inferred from homology"/>
<evidence type="ECO:0000255" key="1">
    <source>
        <dbReference type="HAMAP-Rule" id="MF_00639"/>
    </source>
</evidence>
<keyword id="KW-0067">ATP-binding</keyword>
<keyword id="KW-0131">Cell cycle</keyword>
<keyword id="KW-0132">Cell division</keyword>
<keyword id="KW-0133">Cell shape</keyword>
<keyword id="KW-0961">Cell wall biogenesis/degradation</keyword>
<keyword id="KW-0963">Cytoplasm</keyword>
<keyword id="KW-0436">Ligase</keyword>
<keyword id="KW-0547">Nucleotide-binding</keyword>
<keyword id="KW-0573">Peptidoglycan synthesis</keyword>
<organism>
    <name type="scientific">Lactobacillus helveticus (strain DPC 4571)</name>
    <dbReference type="NCBI Taxonomy" id="405566"/>
    <lineage>
        <taxon>Bacteria</taxon>
        <taxon>Bacillati</taxon>
        <taxon>Bacillota</taxon>
        <taxon>Bacilli</taxon>
        <taxon>Lactobacillales</taxon>
        <taxon>Lactobacillaceae</taxon>
        <taxon>Lactobacillus</taxon>
    </lineage>
</organism>
<protein>
    <recommendedName>
        <fullName evidence="1">UDP-N-acetylmuramoylalanine--D-glutamate ligase</fullName>
        <ecNumber evidence="1">6.3.2.9</ecNumber>
    </recommendedName>
    <alternativeName>
        <fullName evidence="1">D-glutamic acid-adding enzyme</fullName>
    </alternativeName>
    <alternativeName>
        <fullName evidence="1">UDP-N-acetylmuramoyl-L-alanyl-D-glutamate synthetase</fullName>
    </alternativeName>
</protein>